<reference key="1">
    <citation type="journal article" date="2004" name="Proc. Natl. Acad. Sci. U.S.A.">
        <title>Genomic plasticity of the causative agent of melioidosis, Burkholderia pseudomallei.</title>
        <authorList>
            <person name="Holden M.T.G."/>
            <person name="Titball R.W."/>
            <person name="Peacock S.J."/>
            <person name="Cerdeno-Tarraga A.-M."/>
            <person name="Atkins T."/>
            <person name="Crossman L.C."/>
            <person name="Pitt T."/>
            <person name="Churcher C."/>
            <person name="Mungall K.L."/>
            <person name="Bentley S.D."/>
            <person name="Sebaihia M."/>
            <person name="Thomson N.R."/>
            <person name="Bason N."/>
            <person name="Beacham I.R."/>
            <person name="Brooks K."/>
            <person name="Brown K.A."/>
            <person name="Brown N.F."/>
            <person name="Challis G.L."/>
            <person name="Cherevach I."/>
            <person name="Chillingworth T."/>
            <person name="Cronin A."/>
            <person name="Crossett B."/>
            <person name="Davis P."/>
            <person name="DeShazer D."/>
            <person name="Feltwell T."/>
            <person name="Fraser A."/>
            <person name="Hance Z."/>
            <person name="Hauser H."/>
            <person name="Holroyd S."/>
            <person name="Jagels K."/>
            <person name="Keith K.E."/>
            <person name="Maddison M."/>
            <person name="Moule S."/>
            <person name="Price C."/>
            <person name="Quail M.A."/>
            <person name="Rabbinowitsch E."/>
            <person name="Rutherford K."/>
            <person name="Sanders M."/>
            <person name="Simmonds M."/>
            <person name="Songsivilai S."/>
            <person name="Stevens K."/>
            <person name="Tumapa S."/>
            <person name="Vesaratchavest M."/>
            <person name="Whitehead S."/>
            <person name="Yeats C."/>
            <person name="Barrell B.G."/>
            <person name="Oyston P.C.F."/>
            <person name="Parkhill J."/>
        </authorList>
    </citation>
    <scope>NUCLEOTIDE SEQUENCE [LARGE SCALE GENOMIC DNA]</scope>
    <source>
        <strain>K96243</strain>
    </source>
</reference>
<proteinExistence type="inferred from homology"/>
<feature type="chain" id="PRO_0000347375" description="Urease accessory protein UreG">
    <location>
        <begin position="1"/>
        <end position="216"/>
    </location>
</feature>
<feature type="binding site" evidence="1">
    <location>
        <begin position="25"/>
        <end position="32"/>
    </location>
    <ligand>
        <name>GTP</name>
        <dbReference type="ChEBI" id="CHEBI:37565"/>
    </ligand>
</feature>
<keyword id="KW-0143">Chaperone</keyword>
<keyword id="KW-0963">Cytoplasm</keyword>
<keyword id="KW-0342">GTP-binding</keyword>
<keyword id="KW-0996">Nickel insertion</keyword>
<keyword id="KW-0547">Nucleotide-binding</keyword>
<keyword id="KW-1185">Reference proteome</keyword>
<organism>
    <name type="scientific">Burkholderia pseudomallei (strain K96243)</name>
    <dbReference type="NCBI Taxonomy" id="272560"/>
    <lineage>
        <taxon>Bacteria</taxon>
        <taxon>Pseudomonadati</taxon>
        <taxon>Pseudomonadota</taxon>
        <taxon>Betaproteobacteria</taxon>
        <taxon>Burkholderiales</taxon>
        <taxon>Burkholderiaceae</taxon>
        <taxon>Burkholderia</taxon>
        <taxon>pseudomallei group</taxon>
    </lineage>
</organism>
<sequence>MNAPRFAAPARRTKKLPPLRVGIGGPVGSGKTTLLEMLCKGMRERYDLVAITNDIYTKEDQRLLTIAGALPEARIMGVETGGCPHTAIREDASINLEAVERMLARFPDADIVFIESGGDNLAATFSPELSDLTIYVIDVAGGEKIPRKGGPGITKSDLLVINKTDLAPLVGANLEVMASDTRKMRGERPYVMCNLKALDGVADVIAFIENKGLLTV</sequence>
<protein>
    <recommendedName>
        <fullName evidence="1">Urease accessory protein UreG</fullName>
    </recommendedName>
</protein>
<evidence type="ECO:0000255" key="1">
    <source>
        <dbReference type="HAMAP-Rule" id="MF_01389"/>
    </source>
</evidence>
<accession>Q63RL0</accession>
<dbReference type="EMBL" id="BX571965">
    <property type="protein sequence ID" value="CAH36670.1"/>
    <property type="molecule type" value="Genomic_DNA"/>
</dbReference>
<dbReference type="RefSeq" id="WP_004185810.1">
    <property type="nucleotide sequence ID" value="NZ_CP009538.1"/>
</dbReference>
<dbReference type="RefSeq" id="YP_109258.1">
    <property type="nucleotide sequence ID" value="NC_006350.1"/>
</dbReference>
<dbReference type="SMR" id="Q63RL0"/>
<dbReference type="STRING" id="272560.BPSL2662"/>
<dbReference type="GeneID" id="92979890"/>
<dbReference type="KEGG" id="bps:BPSL2662"/>
<dbReference type="PATRIC" id="fig|272560.51.peg.2682"/>
<dbReference type="eggNOG" id="COG0378">
    <property type="taxonomic scope" value="Bacteria"/>
</dbReference>
<dbReference type="Proteomes" id="UP000000605">
    <property type="component" value="Chromosome 1"/>
</dbReference>
<dbReference type="GO" id="GO:0005737">
    <property type="term" value="C:cytoplasm"/>
    <property type="evidence" value="ECO:0007669"/>
    <property type="project" value="UniProtKB-SubCell"/>
</dbReference>
<dbReference type="GO" id="GO:0005525">
    <property type="term" value="F:GTP binding"/>
    <property type="evidence" value="ECO:0007669"/>
    <property type="project" value="UniProtKB-KW"/>
</dbReference>
<dbReference type="GO" id="GO:0003924">
    <property type="term" value="F:GTPase activity"/>
    <property type="evidence" value="ECO:0007669"/>
    <property type="project" value="InterPro"/>
</dbReference>
<dbReference type="GO" id="GO:0016151">
    <property type="term" value="F:nickel cation binding"/>
    <property type="evidence" value="ECO:0007669"/>
    <property type="project" value="UniProtKB-UniRule"/>
</dbReference>
<dbReference type="GO" id="GO:0043419">
    <property type="term" value="P:urea catabolic process"/>
    <property type="evidence" value="ECO:0007669"/>
    <property type="project" value="InterPro"/>
</dbReference>
<dbReference type="CDD" id="cd05540">
    <property type="entry name" value="UreG"/>
    <property type="match status" value="1"/>
</dbReference>
<dbReference type="FunFam" id="3.40.50.300:FF:000208">
    <property type="entry name" value="Urease accessory protein UreG"/>
    <property type="match status" value="1"/>
</dbReference>
<dbReference type="Gene3D" id="3.40.50.300">
    <property type="entry name" value="P-loop containing nucleotide triphosphate hydrolases"/>
    <property type="match status" value="1"/>
</dbReference>
<dbReference type="HAMAP" id="MF_01389">
    <property type="entry name" value="UreG"/>
    <property type="match status" value="1"/>
</dbReference>
<dbReference type="InterPro" id="IPR003495">
    <property type="entry name" value="CobW/HypB/UreG_nucleotide-bd"/>
</dbReference>
<dbReference type="InterPro" id="IPR027417">
    <property type="entry name" value="P-loop_NTPase"/>
</dbReference>
<dbReference type="InterPro" id="IPR004400">
    <property type="entry name" value="UreG"/>
</dbReference>
<dbReference type="NCBIfam" id="TIGR00101">
    <property type="entry name" value="ureG"/>
    <property type="match status" value="1"/>
</dbReference>
<dbReference type="PANTHER" id="PTHR31715">
    <property type="entry name" value="UREASE ACCESSORY PROTEIN G"/>
    <property type="match status" value="1"/>
</dbReference>
<dbReference type="PANTHER" id="PTHR31715:SF0">
    <property type="entry name" value="UREASE ACCESSORY PROTEIN G"/>
    <property type="match status" value="1"/>
</dbReference>
<dbReference type="Pfam" id="PF02492">
    <property type="entry name" value="cobW"/>
    <property type="match status" value="1"/>
</dbReference>
<dbReference type="PIRSF" id="PIRSF005624">
    <property type="entry name" value="Ni-bind_GTPase"/>
    <property type="match status" value="1"/>
</dbReference>
<dbReference type="SUPFAM" id="SSF52540">
    <property type="entry name" value="P-loop containing nucleoside triphosphate hydrolases"/>
    <property type="match status" value="1"/>
</dbReference>
<comment type="function">
    <text evidence="1">Facilitates the functional incorporation of the urease nickel metallocenter. This process requires GTP hydrolysis, probably effectuated by UreG.</text>
</comment>
<comment type="subunit">
    <text evidence="1">Homodimer. UreD, UreF and UreG form a complex that acts as a GTP-hydrolysis-dependent molecular chaperone, activating the urease apoprotein by helping to assemble the nickel containing metallocenter of UreC. The UreE protein probably delivers the nickel.</text>
</comment>
<comment type="subcellular location">
    <subcellularLocation>
        <location evidence="1">Cytoplasm</location>
    </subcellularLocation>
</comment>
<comment type="similarity">
    <text evidence="1">Belongs to the SIMIBI class G3E GTPase family. UreG subfamily.</text>
</comment>
<gene>
    <name evidence="1" type="primary">ureG</name>
    <name type="ordered locus">BPSL2662</name>
</gene>
<name>UREG_BURPS</name>